<comment type="function">
    <text evidence="1">Antimicrobial peptide with a broad-spectrum antimicrobial activity. Keeps its antibacterial activity under a wide range of salt concentrations that mimic physiological conditions of human blood, which is surprising, since Hydra is an obligate freshwater animal with nearly no salt tolerance. Does not affect red blood cells.</text>
</comment>
<comment type="subcellular location">
    <subcellularLocation>
        <location evidence="1">Secreted</location>
    </subcellularLocation>
    <subcellularLocation>
        <location evidence="1">Target cell membrane</location>
    </subcellularLocation>
</comment>
<comment type="tissue specificity">
    <text evidence="1">Expressed in entodermal epithelium along the body column.</text>
</comment>
<comment type="similarity">
    <text evidence="4">Belongs to the arminin family.</text>
</comment>
<evidence type="ECO:0000250" key="1">
    <source>
        <dbReference type="UniProtKB" id="D2XUU4"/>
    </source>
</evidence>
<evidence type="ECO:0000255" key="2"/>
<evidence type="ECO:0000303" key="3">
    <source>
    </source>
</evidence>
<evidence type="ECO:0000305" key="4"/>
<evidence type="ECO:0000312" key="5">
    <source>
        <dbReference type="EMBL" id="ADB56979.1"/>
    </source>
</evidence>
<name>ARM1C_HYDVU</name>
<organism>
    <name type="scientific">Hydra vulgaris</name>
    <name type="common">Hydra</name>
    <name type="synonym">Hydra attenuata</name>
    <dbReference type="NCBI Taxonomy" id="6087"/>
    <lineage>
        <taxon>Eukaryota</taxon>
        <taxon>Metazoa</taxon>
        <taxon>Cnidaria</taxon>
        <taxon>Hydrozoa</taxon>
        <taxon>Hydroidolina</taxon>
        <taxon>Anthoathecata</taxon>
        <taxon>Aplanulata</taxon>
        <taxon>Hydridae</taxon>
        <taxon>Hydra</taxon>
    </lineage>
</organism>
<sequence length="88" mass="10620">MKPVFVILFLTCIAFTYAESYEDVKEEIKNEVEREIFEDLEEESDVLDSNVREFNDAKPWRFRRAIQRVRWRKVAPYMPFVVKTVGKK</sequence>
<reference evidence="5" key="1">
    <citation type="journal article" date="2009" name="Antimicrob. Agents Chemother.">
        <title>Activity of the novel peptide arminin against multiresistant human pathogens shows the considerable potential of phylogenetically ancient organisms as drug sources.</title>
        <authorList>
            <person name="Augustin R."/>
            <person name="Anton-Erxleben F."/>
            <person name="Jungnickel S."/>
            <person name="Hemmrich G."/>
            <person name="Spudy B."/>
            <person name="Podschun R."/>
            <person name="Bosch T.C."/>
        </authorList>
    </citation>
    <scope>NUCLEOTIDE SEQUENCE [MRNA]</scope>
    <source>
        <strain>AEP</strain>
    </source>
</reference>
<dbReference type="EMBL" id="GU256276">
    <property type="protein sequence ID" value="ADB56979.1"/>
    <property type="molecule type" value="mRNA"/>
</dbReference>
<dbReference type="Proteomes" id="UP000694840">
    <property type="component" value="Unplaced"/>
</dbReference>
<dbReference type="GO" id="GO:0005576">
    <property type="term" value="C:extracellular region"/>
    <property type="evidence" value="ECO:0007669"/>
    <property type="project" value="UniProtKB-SubCell"/>
</dbReference>
<accession>D2XUU6</accession>
<keyword id="KW-0027">Amidation</keyword>
<keyword id="KW-0044">Antibiotic</keyword>
<keyword id="KW-0929">Antimicrobial</keyword>
<keyword id="KW-0391">Immunity</keyword>
<keyword id="KW-0399">Innate immunity</keyword>
<keyword id="KW-0472">Membrane</keyword>
<keyword id="KW-1185">Reference proteome</keyword>
<keyword id="KW-0964">Secreted</keyword>
<keyword id="KW-0732">Signal</keyword>
<keyword id="KW-1052">Target cell membrane</keyword>
<keyword id="KW-1053">Target membrane</keyword>
<proteinExistence type="inferred from homology"/>
<feature type="signal peptide" evidence="2">
    <location>
        <begin position="1"/>
        <end position="18"/>
    </location>
</feature>
<feature type="propeptide" id="PRO_0000461967" evidence="1">
    <location>
        <begin position="19"/>
        <end position="57"/>
    </location>
</feature>
<feature type="peptide" id="PRO_5003039543" description="Arminin 1c" evidence="1">
    <location>
        <begin position="58"/>
        <end position="85"/>
    </location>
</feature>
<feature type="modified residue" description="Valine amide" evidence="1">
    <location>
        <position position="85"/>
    </location>
</feature>
<protein>
    <recommendedName>
        <fullName evidence="3">Arminin 1c</fullName>
    </recommendedName>
</protein>